<comment type="subcellular location">
    <subcellularLocation>
        <location evidence="5">Lysosome</location>
    </subcellularLocation>
</comment>
<comment type="similarity">
    <text evidence="3 4">Belongs to the peptidase C1 family.</text>
</comment>
<keyword id="KW-1015">Disulfide bond</keyword>
<keyword id="KW-0378">Hydrolase</keyword>
<keyword id="KW-0458">Lysosome</keyword>
<keyword id="KW-0645">Protease</keyword>
<keyword id="KW-1185">Reference proteome</keyword>
<keyword id="KW-0732">Signal</keyword>
<keyword id="KW-0788">Thiol protease</keyword>
<keyword id="KW-0865">Zymogen</keyword>
<dbReference type="EC" id="3.4.22.-"/>
<dbReference type="EMBL" id="AAFI02000057">
    <property type="protein sequence ID" value="EAL65548.1"/>
    <property type="molecule type" value="Genomic_DNA"/>
</dbReference>
<dbReference type="EMBL" id="X03930">
    <property type="protein sequence ID" value="CAA27569.1"/>
    <property type="molecule type" value="Genomic_DNA"/>
</dbReference>
<dbReference type="RefSeq" id="XP_638859.1">
    <property type="nucleotide sequence ID" value="XM_633767.1"/>
</dbReference>
<dbReference type="SMR" id="Q23894"/>
<dbReference type="FunCoup" id="Q23894">
    <property type="interactions" value="75"/>
</dbReference>
<dbReference type="STRING" id="44689.Q23894"/>
<dbReference type="MEROPS" id="C01.A55"/>
<dbReference type="MEROPS" id="I29.003"/>
<dbReference type="PaxDb" id="44689-DDB0220784"/>
<dbReference type="EnsemblProtists" id="EAL65548">
    <property type="protein sequence ID" value="EAL65548"/>
    <property type="gene ID" value="DDB_G0283867"/>
</dbReference>
<dbReference type="GeneID" id="8624257"/>
<dbReference type="KEGG" id="ddi:DDB_G0283867"/>
<dbReference type="dictyBase" id="DDB_G0283867">
    <property type="gene designation" value="cprC"/>
</dbReference>
<dbReference type="VEuPathDB" id="AmoebaDB:DDB_G0283867"/>
<dbReference type="eggNOG" id="KOG1543">
    <property type="taxonomic scope" value="Eukaryota"/>
</dbReference>
<dbReference type="HOGENOM" id="CLU_012184_1_2_1"/>
<dbReference type="InParanoid" id="Q23894"/>
<dbReference type="OMA" id="KSNPNQM"/>
<dbReference type="PhylomeDB" id="Q23894"/>
<dbReference type="Reactome" id="R-DDI-1474228">
    <property type="pathway name" value="Degradation of the extracellular matrix"/>
</dbReference>
<dbReference type="Reactome" id="R-DDI-2132295">
    <property type="pathway name" value="MHC class II antigen presentation"/>
</dbReference>
<dbReference type="Reactome" id="R-DDI-6798695">
    <property type="pathway name" value="Neutrophil degranulation"/>
</dbReference>
<dbReference type="PRO" id="PR:Q23894"/>
<dbReference type="Proteomes" id="UP000002195">
    <property type="component" value="Chromosome 4"/>
</dbReference>
<dbReference type="GO" id="GO:0005615">
    <property type="term" value="C:extracellular space"/>
    <property type="evidence" value="ECO:0000318"/>
    <property type="project" value="GO_Central"/>
</dbReference>
<dbReference type="GO" id="GO:0005764">
    <property type="term" value="C:lysosome"/>
    <property type="evidence" value="ECO:0000318"/>
    <property type="project" value="GO_Central"/>
</dbReference>
<dbReference type="GO" id="GO:0004197">
    <property type="term" value="F:cysteine-type endopeptidase activity"/>
    <property type="evidence" value="ECO:0000318"/>
    <property type="project" value="GO_Central"/>
</dbReference>
<dbReference type="GO" id="GO:0006955">
    <property type="term" value="P:immune response"/>
    <property type="evidence" value="ECO:0000318"/>
    <property type="project" value="GO_Central"/>
</dbReference>
<dbReference type="GO" id="GO:2001235">
    <property type="term" value="P:positive regulation of apoptotic signaling pathway"/>
    <property type="evidence" value="ECO:0000318"/>
    <property type="project" value="GO_Central"/>
</dbReference>
<dbReference type="GO" id="GO:0051603">
    <property type="term" value="P:proteolysis involved in protein catabolic process"/>
    <property type="evidence" value="ECO:0000318"/>
    <property type="project" value="GO_Central"/>
</dbReference>
<dbReference type="CDD" id="cd02248">
    <property type="entry name" value="Peptidase_C1A"/>
    <property type="match status" value="1"/>
</dbReference>
<dbReference type="FunFam" id="3.90.70.10:FF:000198">
    <property type="entry name" value="Cysteine proteinase 3"/>
    <property type="match status" value="1"/>
</dbReference>
<dbReference type="Gene3D" id="3.90.70.10">
    <property type="entry name" value="Cysteine proteinases"/>
    <property type="match status" value="1"/>
</dbReference>
<dbReference type="InterPro" id="IPR038765">
    <property type="entry name" value="Papain-like_cys_pep_sf"/>
</dbReference>
<dbReference type="InterPro" id="IPR000169">
    <property type="entry name" value="Pept_cys_AS"/>
</dbReference>
<dbReference type="InterPro" id="IPR025660">
    <property type="entry name" value="Pept_his_AS"/>
</dbReference>
<dbReference type="InterPro" id="IPR013128">
    <property type="entry name" value="Peptidase_C1A"/>
</dbReference>
<dbReference type="InterPro" id="IPR000668">
    <property type="entry name" value="Peptidase_C1A_C"/>
</dbReference>
<dbReference type="InterPro" id="IPR039417">
    <property type="entry name" value="Peptidase_C1A_papain-like"/>
</dbReference>
<dbReference type="InterPro" id="IPR013201">
    <property type="entry name" value="Prot_inhib_I29"/>
</dbReference>
<dbReference type="PANTHER" id="PTHR12411">
    <property type="entry name" value="CYSTEINE PROTEASE FAMILY C1-RELATED"/>
    <property type="match status" value="1"/>
</dbReference>
<dbReference type="Pfam" id="PF08246">
    <property type="entry name" value="Inhibitor_I29"/>
    <property type="match status" value="1"/>
</dbReference>
<dbReference type="Pfam" id="PF00112">
    <property type="entry name" value="Peptidase_C1"/>
    <property type="match status" value="1"/>
</dbReference>
<dbReference type="PRINTS" id="PR00705">
    <property type="entry name" value="PAPAIN"/>
</dbReference>
<dbReference type="SMART" id="SM00848">
    <property type="entry name" value="Inhibitor_I29"/>
    <property type="match status" value="1"/>
</dbReference>
<dbReference type="SMART" id="SM00645">
    <property type="entry name" value="Pept_C1"/>
    <property type="match status" value="1"/>
</dbReference>
<dbReference type="SUPFAM" id="SSF54001">
    <property type="entry name" value="Cysteine proteinases"/>
    <property type="match status" value="1"/>
</dbReference>
<dbReference type="PROSITE" id="PS00139">
    <property type="entry name" value="THIOL_PROTEASE_CYS"/>
    <property type="match status" value="1"/>
</dbReference>
<dbReference type="PROSITE" id="PS00639">
    <property type="entry name" value="THIOL_PROTEASE_HIS"/>
    <property type="match status" value="1"/>
</dbReference>
<feature type="signal peptide" evidence="2">
    <location>
        <begin position="1"/>
        <end position="21"/>
    </location>
</feature>
<feature type="propeptide" id="PRO_0000312513" description="Activation peptide" evidence="2">
    <location>
        <begin position="22"/>
        <end position="120"/>
    </location>
</feature>
<feature type="chain" id="PRO_0000050544" description="Cysteine proteinase 3">
    <location>
        <begin position="121"/>
        <end position="337"/>
    </location>
</feature>
<feature type="active site" evidence="1">
    <location>
        <position position="145"/>
    </location>
</feature>
<feature type="active site" evidence="1">
    <location>
        <position position="284"/>
    </location>
</feature>
<feature type="active site" evidence="1">
    <location>
        <position position="304"/>
    </location>
</feature>
<feature type="disulfide bond" evidence="1">
    <location>
        <begin position="142"/>
        <end position="185"/>
    </location>
</feature>
<feature type="disulfide bond" evidence="1">
    <location>
        <begin position="176"/>
        <end position="219"/>
    </location>
</feature>
<feature type="disulfide bond" evidence="1">
    <location>
        <begin position="277"/>
        <end position="326"/>
    </location>
</feature>
<feature type="sequence conflict" description="In Ref. 2; CAA27569." evidence="5" ref="2">
    <original>Q</original>
    <variation>H</variation>
    <location>
        <position position="118"/>
    </location>
</feature>
<feature type="sequence conflict" description="In Ref. 2; CAA27569." evidence="5" ref="2">
    <original>YSF</original>
    <variation>II</variation>
    <location>
        <begin position="146"/>
        <end position="148"/>
    </location>
</feature>
<feature type="sequence conflict" description="In Ref. 2; CAA27569." evidence="5" ref="2">
    <original>DC</original>
    <variation>RL</variation>
    <location>
        <begin position="175"/>
        <end position="176"/>
    </location>
</feature>
<feature type="sequence conflict" description="In Ref. 2; CAA27569." evidence="5" ref="2">
    <original>TNAFEYI</original>
    <variation>KLFVYS</variation>
    <location>
        <begin position="191"/>
        <end position="197"/>
    </location>
</feature>
<evidence type="ECO:0000250" key="1"/>
<evidence type="ECO:0000255" key="2"/>
<evidence type="ECO:0000255" key="3">
    <source>
        <dbReference type="PROSITE-ProRule" id="PRU10088"/>
    </source>
</evidence>
<evidence type="ECO:0000255" key="4">
    <source>
        <dbReference type="PROSITE-ProRule" id="PRU10089"/>
    </source>
</evidence>
<evidence type="ECO:0000305" key="5"/>
<sequence>MRLSITLIFTLIVLSISFISAGNVFSHKQYQDSFIDWMRSNNKAYTHKEFMPRYEEFKKNMDYVHNWNSKGSKTVLGLNQHADLSNEEYRLNYLGTRAHIKLNGYHKRNLGLRLNRPQFKQPLNVDWREKDAVTPVKDQGQCGSCYSFSTTGSVEGVTAIKTGKLVSLSEQNILDCSSSFGNEGCNGGLMTNAFEYIIKNNGLNSEEQYPYEMKVNDECKFQEGSVAAKITSYKEIEAGDENDLQNALLLNPVSVAIDASHNSFQLYTAGVYYEPACSSEDLDHGVLAVGMGTDNGEDYYIVKNSWGPSWGLNGYIHMARNKDNNCGISTMASYPIA</sequence>
<organism>
    <name type="scientific">Dictyostelium discoideum</name>
    <name type="common">Social amoeba</name>
    <dbReference type="NCBI Taxonomy" id="44689"/>
    <lineage>
        <taxon>Eukaryota</taxon>
        <taxon>Amoebozoa</taxon>
        <taxon>Evosea</taxon>
        <taxon>Eumycetozoa</taxon>
        <taxon>Dictyostelia</taxon>
        <taxon>Dictyosteliales</taxon>
        <taxon>Dictyosteliaceae</taxon>
        <taxon>Dictyostelium</taxon>
    </lineage>
</organism>
<name>CYSP3_DICDI</name>
<proteinExistence type="inferred from homology"/>
<reference key="1">
    <citation type="journal article" date="2005" name="Nature">
        <title>The genome of the social amoeba Dictyostelium discoideum.</title>
        <authorList>
            <person name="Eichinger L."/>
            <person name="Pachebat J.A."/>
            <person name="Gloeckner G."/>
            <person name="Rajandream M.A."/>
            <person name="Sucgang R."/>
            <person name="Berriman M."/>
            <person name="Song J."/>
            <person name="Olsen R."/>
            <person name="Szafranski K."/>
            <person name="Xu Q."/>
            <person name="Tunggal B."/>
            <person name="Kummerfeld S."/>
            <person name="Madera M."/>
            <person name="Konfortov B.A."/>
            <person name="Rivero F."/>
            <person name="Bankier A.T."/>
            <person name="Lehmann R."/>
            <person name="Hamlin N."/>
            <person name="Davies R."/>
            <person name="Gaudet P."/>
            <person name="Fey P."/>
            <person name="Pilcher K."/>
            <person name="Chen G."/>
            <person name="Saunders D."/>
            <person name="Sodergren E.J."/>
            <person name="Davis P."/>
            <person name="Kerhornou A."/>
            <person name="Nie X."/>
            <person name="Hall N."/>
            <person name="Anjard C."/>
            <person name="Hemphill L."/>
            <person name="Bason N."/>
            <person name="Farbrother P."/>
            <person name="Desany B."/>
            <person name="Just E."/>
            <person name="Morio T."/>
            <person name="Rost R."/>
            <person name="Churcher C.M."/>
            <person name="Cooper J."/>
            <person name="Haydock S."/>
            <person name="van Driessche N."/>
            <person name="Cronin A."/>
            <person name="Goodhead I."/>
            <person name="Muzny D.M."/>
            <person name="Mourier T."/>
            <person name="Pain A."/>
            <person name="Lu M."/>
            <person name="Harper D."/>
            <person name="Lindsay R."/>
            <person name="Hauser H."/>
            <person name="James K.D."/>
            <person name="Quiles M."/>
            <person name="Madan Babu M."/>
            <person name="Saito T."/>
            <person name="Buchrieser C."/>
            <person name="Wardroper A."/>
            <person name="Felder M."/>
            <person name="Thangavelu M."/>
            <person name="Johnson D."/>
            <person name="Knights A."/>
            <person name="Loulseged H."/>
            <person name="Mungall K.L."/>
            <person name="Oliver K."/>
            <person name="Price C."/>
            <person name="Quail M.A."/>
            <person name="Urushihara H."/>
            <person name="Hernandez J."/>
            <person name="Rabbinowitsch E."/>
            <person name="Steffen D."/>
            <person name="Sanders M."/>
            <person name="Ma J."/>
            <person name="Kohara Y."/>
            <person name="Sharp S."/>
            <person name="Simmonds M.N."/>
            <person name="Spiegler S."/>
            <person name="Tivey A."/>
            <person name="Sugano S."/>
            <person name="White B."/>
            <person name="Walker D."/>
            <person name="Woodward J.R."/>
            <person name="Winckler T."/>
            <person name="Tanaka Y."/>
            <person name="Shaulsky G."/>
            <person name="Schleicher M."/>
            <person name="Weinstock G.M."/>
            <person name="Rosenthal A."/>
            <person name="Cox E.C."/>
            <person name="Chisholm R.L."/>
            <person name="Gibbs R.A."/>
            <person name="Loomis W.F."/>
            <person name="Platzer M."/>
            <person name="Kay R.R."/>
            <person name="Williams J.G."/>
            <person name="Dear P.H."/>
            <person name="Noegel A.A."/>
            <person name="Barrell B.G."/>
            <person name="Kuspa A."/>
        </authorList>
    </citation>
    <scope>NUCLEOTIDE SEQUENCE [LARGE SCALE GENOMIC DNA]</scope>
    <source>
        <strain>AX4</strain>
    </source>
</reference>
<reference key="2">
    <citation type="journal article" date="1986" name="Mol. Gen. Genet.">
        <title>Structural analysis of a developmentally regulated sequence encoding for a cysteine proteinase in Dictyostelium discoideum.</title>
        <authorList>
            <person name="Presse F."/>
            <person name="Bogdanovsky-Sequeval D."/>
            <person name="Mathieu M."/>
            <person name="Felenbok B."/>
        </authorList>
    </citation>
    <scope>NUCLEOTIDE SEQUENCE [GENOMIC DNA] OF 46-198</scope>
    <source>
        <strain>AX2</strain>
    </source>
</reference>
<gene>
    <name type="primary">cprC</name>
    <name type="synonym">CP3</name>
    <name type="ORF">DDB_G0283867</name>
</gene>
<accession>Q23894</accession>
<accession>Q54QL2</accession>
<protein>
    <recommendedName>
        <fullName>Cysteine proteinase 3</fullName>
        <ecNumber>3.4.22.-</ecNumber>
    </recommendedName>
    <alternativeName>
        <fullName>Cysteine proteinase II</fullName>
    </alternativeName>
</protein>